<comment type="function">
    <text evidence="1">Produces ATP from ADP in the presence of a proton gradient across the membrane.</text>
</comment>
<comment type="subunit">
    <text>F-type ATPases have 2 components, CF(1) - the catalytic core - and CF(0) - the membrane proton channel. CF(1) has five subunits: alpha(3), beta(3), gamma(1), delta(1), epsilon(1). CF(0) has three main subunits: a, b and c.</text>
</comment>
<comment type="subcellular location">
    <subcellularLocation>
        <location evidence="1">Cell inner membrane</location>
        <topology evidence="1">Peripheral membrane protein</topology>
    </subcellularLocation>
</comment>
<comment type="similarity">
    <text evidence="1">Belongs to the ATPase epsilon chain family.</text>
</comment>
<feature type="chain" id="PRO_0000265924" description="ATP synthase epsilon chain">
    <location>
        <begin position="1"/>
        <end position="140"/>
    </location>
</feature>
<organism>
    <name type="scientific">Xanthomonas campestris pv. campestris (strain 8004)</name>
    <dbReference type="NCBI Taxonomy" id="314565"/>
    <lineage>
        <taxon>Bacteria</taxon>
        <taxon>Pseudomonadati</taxon>
        <taxon>Pseudomonadota</taxon>
        <taxon>Gammaproteobacteria</taxon>
        <taxon>Lysobacterales</taxon>
        <taxon>Lysobacteraceae</taxon>
        <taxon>Xanthomonas</taxon>
    </lineage>
</organism>
<gene>
    <name evidence="1" type="primary">atpC</name>
    <name type="ordered locus">XC_3677</name>
</gene>
<proteinExistence type="inferred from homology"/>
<keyword id="KW-0066">ATP synthesis</keyword>
<keyword id="KW-0997">Cell inner membrane</keyword>
<keyword id="KW-1003">Cell membrane</keyword>
<keyword id="KW-0139">CF(1)</keyword>
<keyword id="KW-0375">Hydrogen ion transport</keyword>
<keyword id="KW-0406">Ion transport</keyword>
<keyword id="KW-0472">Membrane</keyword>
<keyword id="KW-0813">Transport</keyword>
<protein>
    <recommendedName>
        <fullName evidence="1">ATP synthase epsilon chain</fullName>
    </recommendedName>
    <alternativeName>
        <fullName evidence="1">ATP synthase F1 sector epsilon subunit</fullName>
    </alternativeName>
    <alternativeName>
        <fullName evidence="1">F-ATPase epsilon subunit</fullName>
    </alternativeName>
</protein>
<accession>Q4UQF5</accession>
<sequence>MSTIRCDIVSAEQEIFRGEATLVVATGELGELGIAPKHAPLITRLKPGKVVVTTASGEQLDFAISGGILEVQPQVVTVLVDTAIRAQDIDEAAVRKAKEEAERLLANRGDTVDVEQAQRQLAEATVQLQALERLRRTLKH</sequence>
<name>ATPE_XANC8</name>
<dbReference type="EMBL" id="CP000050">
    <property type="protein sequence ID" value="AAY50718.1"/>
    <property type="molecule type" value="Genomic_DNA"/>
</dbReference>
<dbReference type="RefSeq" id="WP_011035802.1">
    <property type="nucleotide sequence ID" value="NZ_CP155948.1"/>
</dbReference>
<dbReference type="SMR" id="Q4UQF5"/>
<dbReference type="KEGG" id="xcb:XC_3677"/>
<dbReference type="HOGENOM" id="CLU_084338_2_0_6"/>
<dbReference type="Proteomes" id="UP000000420">
    <property type="component" value="Chromosome"/>
</dbReference>
<dbReference type="GO" id="GO:0005886">
    <property type="term" value="C:plasma membrane"/>
    <property type="evidence" value="ECO:0007669"/>
    <property type="project" value="UniProtKB-SubCell"/>
</dbReference>
<dbReference type="GO" id="GO:0045259">
    <property type="term" value="C:proton-transporting ATP synthase complex"/>
    <property type="evidence" value="ECO:0007669"/>
    <property type="project" value="UniProtKB-KW"/>
</dbReference>
<dbReference type="GO" id="GO:0005524">
    <property type="term" value="F:ATP binding"/>
    <property type="evidence" value="ECO:0007669"/>
    <property type="project" value="UniProtKB-UniRule"/>
</dbReference>
<dbReference type="GO" id="GO:0046933">
    <property type="term" value="F:proton-transporting ATP synthase activity, rotational mechanism"/>
    <property type="evidence" value="ECO:0007669"/>
    <property type="project" value="UniProtKB-UniRule"/>
</dbReference>
<dbReference type="CDD" id="cd12152">
    <property type="entry name" value="F1-ATPase_delta"/>
    <property type="match status" value="1"/>
</dbReference>
<dbReference type="FunFam" id="2.60.15.10:FF:000001">
    <property type="entry name" value="ATP synthase epsilon chain"/>
    <property type="match status" value="1"/>
</dbReference>
<dbReference type="Gene3D" id="1.20.5.440">
    <property type="entry name" value="ATP synthase delta/epsilon subunit, C-terminal domain"/>
    <property type="match status" value="1"/>
</dbReference>
<dbReference type="Gene3D" id="2.60.15.10">
    <property type="entry name" value="F0F1 ATP synthase delta/epsilon subunit, N-terminal"/>
    <property type="match status" value="1"/>
</dbReference>
<dbReference type="HAMAP" id="MF_00530">
    <property type="entry name" value="ATP_synth_epsil_bac"/>
    <property type="match status" value="1"/>
</dbReference>
<dbReference type="InterPro" id="IPR036794">
    <property type="entry name" value="ATP_F1_dsu/esu_C_sf"/>
</dbReference>
<dbReference type="InterPro" id="IPR001469">
    <property type="entry name" value="ATP_synth_F1_dsu/esu"/>
</dbReference>
<dbReference type="InterPro" id="IPR020546">
    <property type="entry name" value="ATP_synth_F1_dsu/esu_N"/>
</dbReference>
<dbReference type="InterPro" id="IPR020547">
    <property type="entry name" value="ATP_synth_F1_esu_C"/>
</dbReference>
<dbReference type="InterPro" id="IPR036771">
    <property type="entry name" value="ATPsynth_dsu/esu_N"/>
</dbReference>
<dbReference type="NCBIfam" id="TIGR01216">
    <property type="entry name" value="ATP_synt_epsi"/>
    <property type="match status" value="1"/>
</dbReference>
<dbReference type="NCBIfam" id="NF001847">
    <property type="entry name" value="PRK00571.1-4"/>
    <property type="match status" value="1"/>
</dbReference>
<dbReference type="PANTHER" id="PTHR13822">
    <property type="entry name" value="ATP SYNTHASE DELTA/EPSILON CHAIN"/>
    <property type="match status" value="1"/>
</dbReference>
<dbReference type="PANTHER" id="PTHR13822:SF10">
    <property type="entry name" value="ATP SYNTHASE EPSILON CHAIN, CHLOROPLASTIC"/>
    <property type="match status" value="1"/>
</dbReference>
<dbReference type="Pfam" id="PF00401">
    <property type="entry name" value="ATP-synt_DE"/>
    <property type="match status" value="1"/>
</dbReference>
<dbReference type="Pfam" id="PF02823">
    <property type="entry name" value="ATP-synt_DE_N"/>
    <property type="match status" value="1"/>
</dbReference>
<dbReference type="SUPFAM" id="SSF46604">
    <property type="entry name" value="Epsilon subunit of F1F0-ATP synthase C-terminal domain"/>
    <property type="match status" value="1"/>
</dbReference>
<dbReference type="SUPFAM" id="SSF51344">
    <property type="entry name" value="Epsilon subunit of F1F0-ATP synthase N-terminal domain"/>
    <property type="match status" value="1"/>
</dbReference>
<reference key="1">
    <citation type="journal article" date="2005" name="Genome Res.">
        <title>Comparative and functional genomic analyses of the pathogenicity of phytopathogen Xanthomonas campestris pv. campestris.</title>
        <authorList>
            <person name="Qian W."/>
            <person name="Jia Y."/>
            <person name="Ren S.-X."/>
            <person name="He Y.-Q."/>
            <person name="Feng J.-X."/>
            <person name="Lu L.-F."/>
            <person name="Sun Q."/>
            <person name="Ying G."/>
            <person name="Tang D.-J."/>
            <person name="Tang H."/>
            <person name="Wu W."/>
            <person name="Hao P."/>
            <person name="Wang L."/>
            <person name="Jiang B.-L."/>
            <person name="Zeng S."/>
            <person name="Gu W.-Y."/>
            <person name="Lu G."/>
            <person name="Rong L."/>
            <person name="Tian Y."/>
            <person name="Yao Z."/>
            <person name="Fu G."/>
            <person name="Chen B."/>
            <person name="Fang R."/>
            <person name="Qiang B."/>
            <person name="Chen Z."/>
            <person name="Zhao G.-P."/>
            <person name="Tang J.-L."/>
            <person name="He C."/>
        </authorList>
    </citation>
    <scope>NUCLEOTIDE SEQUENCE [LARGE SCALE GENOMIC DNA]</scope>
    <source>
        <strain>8004</strain>
    </source>
</reference>
<evidence type="ECO:0000255" key="1">
    <source>
        <dbReference type="HAMAP-Rule" id="MF_00530"/>
    </source>
</evidence>